<feature type="initiator methionine" description="Removed" evidence="1">
    <location>
        <position position="1"/>
    </location>
</feature>
<feature type="chain" id="PRO_0000088183" description="Tyrosine-protein kinase Yes">
    <location>
        <begin position="2"/>
        <end position="541"/>
    </location>
</feature>
<feature type="domain" description="SH3" evidence="6">
    <location>
        <begin position="89"/>
        <end position="150"/>
    </location>
</feature>
<feature type="domain" description="SH2" evidence="5">
    <location>
        <begin position="156"/>
        <end position="253"/>
    </location>
</feature>
<feature type="domain" description="Protein kinase" evidence="4">
    <location>
        <begin position="275"/>
        <end position="528"/>
    </location>
</feature>
<feature type="region of interest" description="Disordered" evidence="8">
    <location>
        <begin position="1"/>
        <end position="43"/>
    </location>
</feature>
<feature type="compositionally biased region" description="Basic and acidic residues" evidence="8">
    <location>
        <begin position="1"/>
        <end position="20"/>
    </location>
</feature>
<feature type="compositionally biased region" description="Low complexity" evidence="8">
    <location>
        <begin position="26"/>
        <end position="37"/>
    </location>
</feature>
<feature type="active site" description="Proton acceptor" evidence="4 7">
    <location>
        <position position="394"/>
    </location>
</feature>
<feature type="binding site" evidence="4">
    <location>
        <begin position="281"/>
        <end position="289"/>
    </location>
    <ligand>
        <name>ATP</name>
        <dbReference type="ChEBI" id="CHEBI:30616"/>
    </ligand>
</feature>
<feature type="binding site" evidence="4">
    <location>
        <position position="303"/>
    </location>
    <ligand>
        <name>ATP</name>
        <dbReference type="ChEBI" id="CHEBI:30616"/>
    </ligand>
</feature>
<feature type="modified residue" description="Phosphotyrosine; by autocatalysis" evidence="2">
    <location>
        <position position="424"/>
    </location>
</feature>
<feature type="modified residue" description="Phosphotyrosine; by CSK" evidence="1">
    <location>
        <position position="535"/>
    </location>
</feature>
<feature type="lipid moiety-binding region" description="N-myristoyl glycine" evidence="1">
    <location>
        <position position="2"/>
    </location>
</feature>
<feature type="lipid moiety-binding region" description="S-palmitoyl cysteine; in membrane form" evidence="1">
    <location>
        <position position="3"/>
    </location>
</feature>
<feature type="sequence conflict" description="In Ref. 3; CAA31595." evidence="9" ref="3">
    <original>TPFGG</original>
    <variation>IHPLR</variation>
    <location>
        <begin position="67"/>
        <end position="71"/>
    </location>
</feature>
<feature type="sequence conflict" description="In Ref. 3; CAA31595." evidence="9" ref="3">
    <original>P</original>
    <variation>Q</variation>
    <location>
        <position position="82"/>
    </location>
</feature>
<name>YES_CHICK</name>
<proteinExistence type="evidence at protein level"/>
<accession>P09324</accession>
<organism>
    <name type="scientific">Gallus gallus</name>
    <name type="common">Chicken</name>
    <dbReference type="NCBI Taxonomy" id="9031"/>
    <lineage>
        <taxon>Eukaryota</taxon>
        <taxon>Metazoa</taxon>
        <taxon>Chordata</taxon>
        <taxon>Craniata</taxon>
        <taxon>Vertebrata</taxon>
        <taxon>Euteleostomi</taxon>
        <taxon>Archelosauria</taxon>
        <taxon>Archosauria</taxon>
        <taxon>Dinosauria</taxon>
        <taxon>Saurischia</taxon>
        <taxon>Theropoda</taxon>
        <taxon>Coelurosauria</taxon>
        <taxon>Aves</taxon>
        <taxon>Neognathae</taxon>
        <taxon>Galloanserae</taxon>
        <taxon>Galliformes</taxon>
        <taxon>Phasianidae</taxon>
        <taxon>Phasianinae</taxon>
        <taxon>Gallus</taxon>
    </lineage>
</organism>
<comment type="function">
    <text evidence="1">Non-receptor protein tyrosine kinase that is involved in the regulation of cell growth and survival, apoptosis, cell-cell adhesion, cytoskeleton remodeling, differentiation, G2/M progression and cytokinesis.</text>
</comment>
<comment type="catalytic activity">
    <reaction evidence="7">
        <text>L-tyrosyl-[protein] + ATP = O-phospho-L-tyrosyl-[protein] + ADP + H(+)</text>
        <dbReference type="Rhea" id="RHEA:10596"/>
        <dbReference type="Rhea" id="RHEA-COMP:10136"/>
        <dbReference type="Rhea" id="RHEA-COMP:20101"/>
        <dbReference type="ChEBI" id="CHEBI:15378"/>
        <dbReference type="ChEBI" id="CHEBI:30616"/>
        <dbReference type="ChEBI" id="CHEBI:46858"/>
        <dbReference type="ChEBI" id="CHEBI:61978"/>
        <dbReference type="ChEBI" id="CHEBI:456216"/>
        <dbReference type="EC" id="2.7.10.2"/>
    </reaction>
</comment>
<comment type="subcellular location">
    <subcellularLocation>
        <location evidence="1">Cell membrane</location>
    </subcellularLocation>
    <subcellularLocation>
        <location evidence="1">Cytoplasm</location>
        <location evidence="1">Cytoskeleton</location>
        <location evidence="1">Microtubule organizing center</location>
        <location evidence="1">Centrosome</location>
    </subcellularLocation>
    <subcellularLocation>
        <location evidence="1">Cytoplasm</location>
        <location evidence="1">Cytosol</location>
    </subcellularLocation>
    <subcellularLocation>
        <location evidence="3">Cell junction</location>
    </subcellularLocation>
</comment>
<comment type="PTM">
    <text evidence="2">Autophosphorylation at Tyr-424 maintains enzyme activity.</text>
</comment>
<comment type="PTM">
    <text evidence="1">Palmitoylation at Cys-3 promotes membrane localization.</text>
</comment>
<comment type="similarity">
    <text evidence="4">Belongs to the protein kinase superfamily. Tyr protein kinase family. SRC subfamily.</text>
</comment>
<reference key="1">
    <citation type="journal article" date="1988" name="Nucleic Acids Res.">
        <title>Nucleotide sequence of a cDNA for the chick yes proto-oncogene: comparison with the viral yes gene.</title>
        <authorList>
            <person name="Sudol M."/>
            <person name="Kieswetter C."/>
            <person name="Zhao Y.H."/>
            <person name="Dorai T."/>
            <person name="Wang L.H."/>
            <person name="Hanafusa H."/>
        </authorList>
    </citation>
    <scope>NUCLEOTIDE SEQUENCE [MRNA]</scope>
</reference>
<reference key="2">
    <citation type="submission" date="1988-11" db="EMBL/GenBank/DDBJ databases">
        <authorList>
            <person name="Sudol M."/>
        </authorList>
    </citation>
    <scope>SEQUENCE REVISION TO 233</scope>
</reference>
<reference key="3">
    <citation type="journal article" date="1989" name="Oncogene">
        <title>The sequence of chicken c-yes and p61c-yes.</title>
        <authorList>
            <person name="Zheng X."/>
            <person name="Podell S."/>
            <person name="Sefton B.M."/>
            <person name="Kaplan P.L."/>
        </authorList>
    </citation>
    <scope>NUCLEOTIDE SEQUENCE [MRNA]</scope>
    <source>
        <tissue>Brain</tissue>
        <tissue>Kidney</tissue>
    </source>
</reference>
<reference key="4">
    <citation type="journal article" date="1992" name="Oncogene">
        <title>Molecular cloning of a family of protein kinase genes expressed in the avian embryo.</title>
        <authorList>
            <person name="Marcelle C."/>
            <person name="Eichmann A."/>
        </authorList>
    </citation>
    <scope>NUCLEOTIDE SEQUENCE [MRNA] OF 396-451</scope>
</reference>
<reference key="5">
    <citation type="journal article" date="1994" name="Oncogene">
        <title>Yes-associated protein (YAP65) is a proline-rich phosphoprotein that binds to the SH3 domain of the Yes proto-oncogene product.</title>
        <authorList>
            <person name="Sudol M."/>
        </authorList>
    </citation>
    <scope>INTERACTION WITH YAP1</scope>
</reference>
<protein>
    <recommendedName>
        <fullName>Tyrosine-protein kinase Yes</fullName>
        <ecNumber>2.7.10.2</ecNumber>
    </recommendedName>
    <alternativeName>
        <fullName>p61-Yes</fullName>
    </alternativeName>
</protein>
<evidence type="ECO:0000250" key="1"/>
<evidence type="ECO:0000250" key="2">
    <source>
        <dbReference type="UniProtKB" id="P07947"/>
    </source>
</evidence>
<evidence type="ECO:0000250" key="3">
    <source>
        <dbReference type="UniProtKB" id="Q28923"/>
    </source>
</evidence>
<evidence type="ECO:0000255" key="4">
    <source>
        <dbReference type="PROSITE-ProRule" id="PRU00159"/>
    </source>
</evidence>
<evidence type="ECO:0000255" key="5">
    <source>
        <dbReference type="PROSITE-ProRule" id="PRU00191"/>
    </source>
</evidence>
<evidence type="ECO:0000255" key="6">
    <source>
        <dbReference type="PROSITE-ProRule" id="PRU00192"/>
    </source>
</evidence>
<evidence type="ECO:0000255" key="7">
    <source>
        <dbReference type="PROSITE-ProRule" id="PRU10028"/>
    </source>
</evidence>
<evidence type="ECO:0000256" key="8">
    <source>
        <dbReference type="SAM" id="MobiDB-lite"/>
    </source>
</evidence>
<evidence type="ECO:0000305" key="9"/>
<gene>
    <name type="primary">YES1</name>
    <name type="synonym">YES</name>
</gene>
<sequence length="541" mass="60792">MGCIKSKEDKGPAMKYRTDNTPEPISSHVSHYGSDSSQATQSPAIKGSAVNFNSHSMTPFGGPSGMTPFGGASSSFSAVPSPYPSTLTGGVTVFVALYDYEARTTDDLSFKKGERFQIINNTEGDWWEARSIATGKTGYIPSNYVAPADSIQAEEWYFGKMGRKDAERLLLNPGNQRGIFLVRESETTKGAYSLSIRDWDEVRGDNVKHYKIRKLDNGGYYITTRAQFESLQKLVKHYREHADGLCHKLTTVCPTVKPQTQGLAKDAWEIPRESLRLEVKLGQGCFGEVWMGTWNGTTKVAIKTLKPGTMMPEAFLQEAQIMKKLRHDKLVPLYAVVSEEPIYIVTEFMTKGSLLDFLKEGEGKFLKLPQLVDMAAQIADGMAYIERMNYIHRDLRAANILVGDNLVCKIADFGLARLIEDNEYTARQGAKFPIKWTAPEAALYGRFTIKSDVWSFGILLTELVTKGRVPYPGMVNREVLEQVERGYRMPCPQGCPESLHELMKLCWKKDPDERPTFEYIQSFLEDYFTATEPQYQPGDNL</sequence>
<keyword id="KW-0067">ATP-binding</keyword>
<keyword id="KW-0965">Cell junction</keyword>
<keyword id="KW-1003">Cell membrane</keyword>
<keyword id="KW-0963">Cytoplasm</keyword>
<keyword id="KW-0206">Cytoskeleton</keyword>
<keyword id="KW-0418">Kinase</keyword>
<keyword id="KW-0449">Lipoprotein</keyword>
<keyword id="KW-0472">Membrane</keyword>
<keyword id="KW-0519">Myristate</keyword>
<keyword id="KW-0547">Nucleotide-binding</keyword>
<keyword id="KW-0564">Palmitate</keyword>
<keyword id="KW-0597">Phosphoprotein</keyword>
<keyword id="KW-1185">Reference proteome</keyword>
<keyword id="KW-0727">SH2 domain</keyword>
<keyword id="KW-0728">SH3 domain</keyword>
<keyword id="KW-0808">Transferase</keyword>
<keyword id="KW-0829">Tyrosine-protein kinase</keyword>
<dbReference type="EC" id="2.7.10.2"/>
<dbReference type="EMBL" id="X12461">
    <property type="protein sequence ID" value="CAA31002.1"/>
    <property type="molecule type" value="mRNA"/>
</dbReference>
<dbReference type="EMBL" id="X13207">
    <property type="protein sequence ID" value="CAA31595.1"/>
    <property type="molecule type" value="mRNA"/>
</dbReference>
<dbReference type="EMBL" id="X69695">
    <property type="protein sequence ID" value="CAA49365.1"/>
    <property type="molecule type" value="mRNA"/>
</dbReference>
<dbReference type="PIR" id="S03324">
    <property type="entry name" value="TVCHYS"/>
</dbReference>
<dbReference type="RefSeq" id="NP_990632.1">
    <property type="nucleotide sequence ID" value="NM_205301.2"/>
</dbReference>
<dbReference type="SMR" id="P09324"/>
<dbReference type="FunCoup" id="P09324">
    <property type="interactions" value="272"/>
</dbReference>
<dbReference type="STRING" id="9031.ENSGALP00000050000"/>
<dbReference type="PaxDb" id="9031-ENSGALP00000023934"/>
<dbReference type="Ensembl" id="ENSGALT00010008965.1">
    <property type="protein sequence ID" value="ENSGALP00010005290.1"/>
    <property type="gene ID" value="ENSGALG00010003874.1"/>
</dbReference>
<dbReference type="GeneID" id="396238"/>
<dbReference type="KEGG" id="gga:396238"/>
<dbReference type="CTD" id="7525"/>
<dbReference type="VEuPathDB" id="HostDB:geneid_396238"/>
<dbReference type="eggNOG" id="KOG0197">
    <property type="taxonomic scope" value="Eukaryota"/>
</dbReference>
<dbReference type="GeneTree" id="ENSGT00940000154920"/>
<dbReference type="HOGENOM" id="CLU_000288_7_2_1"/>
<dbReference type="InParanoid" id="P09324"/>
<dbReference type="OMA" id="RTENTPD"/>
<dbReference type="OrthoDB" id="4062651at2759"/>
<dbReference type="PhylomeDB" id="P09324"/>
<dbReference type="BRENDA" id="2.7.10.2">
    <property type="organism ID" value="1306"/>
</dbReference>
<dbReference type="Reactome" id="R-GGA-1227986">
    <property type="pathway name" value="Signaling by ERBB2"/>
</dbReference>
<dbReference type="Reactome" id="R-GGA-1433557">
    <property type="pathway name" value="Signaling by SCF-KIT"/>
</dbReference>
<dbReference type="Reactome" id="R-GGA-1433559">
    <property type="pathway name" value="Regulation of KIT signaling"/>
</dbReference>
<dbReference type="Reactome" id="R-GGA-2029481">
    <property type="pathway name" value="FCGR activation"/>
</dbReference>
<dbReference type="Reactome" id="R-GGA-210990">
    <property type="pathway name" value="PECAM1 interactions"/>
</dbReference>
<dbReference type="Reactome" id="R-GGA-389356">
    <property type="pathway name" value="Co-stimulation by CD28"/>
</dbReference>
<dbReference type="Reactome" id="R-GGA-389513">
    <property type="pathway name" value="Co-inhibition by CTLA4"/>
</dbReference>
<dbReference type="Reactome" id="R-GGA-3928662">
    <property type="pathway name" value="EPHB-mediated forward signaling"/>
</dbReference>
<dbReference type="Reactome" id="R-GGA-3928663">
    <property type="pathway name" value="EPHA-mediated growth cone collapse"/>
</dbReference>
<dbReference type="Reactome" id="R-GGA-3928665">
    <property type="pathway name" value="EPH-ephrin mediated repulsion of cells"/>
</dbReference>
<dbReference type="Reactome" id="R-GGA-912631">
    <property type="pathway name" value="Regulation of signaling by CBL"/>
</dbReference>
<dbReference type="PRO" id="PR:P09324"/>
<dbReference type="Proteomes" id="UP000000539">
    <property type="component" value="Chromosome 2"/>
</dbReference>
<dbReference type="Bgee" id="ENSGALG00000014860">
    <property type="expression patterns" value="Expressed in kidney and 12 other cell types or tissues"/>
</dbReference>
<dbReference type="GO" id="GO:0070161">
    <property type="term" value="C:anchoring junction"/>
    <property type="evidence" value="ECO:0007669"/>
    <property type="project" value="UniProtKB-SubCell"/>
</dbReference>
<dbReference type="GO" id="GO:0005813">
    <property type="term" value="C:centrosome"/>
    <property type="evidence" value="ECO:0007669"/>
    <property type="project" value="UniProtKB-SubCell"/>
</dbReference>
<dbReference type="GO" id="GO:0005829">
    <property type="term" value="C:cytosol"/>
    <property type="evidence" value="ECO:0000304"/>
    <property type="project" value="Reactome"/>
</dbReference>
<dbReference type="GO" id="GO:0005794">
    <property type="term" value="C:Golgi apparatus"/>
    <property type="evidence" value="ECO:0007669"/>
    <property type="project" value="Ensembl"/>
</dbReference>
<dbReference type="GO" id="GO:0005886">
    <property type="term" value="C:plasma membrane"/>
    <property type="evidence" value="ECO:0000318"/>
    <property type="project" value="GO_Central"/>
</dbReference>
<dbReference type="GO" id="GO:0005524">
    <property type="term" value="F:ATP binding"/>
    <property type="evidence" value="ECO:0007669"/>
    <property type="project" value="UniProtKB-KW"/>
</dbReference>
<dbReference type="GO" id="GO:0019899">
    <property type="term" value="F:enzyme binding"/>
    <property type="evidence" value="ECO:0007669"/>
    <property type="project" value="Ensembl"/>
</dbReference>
<dbReference type="GO" id="GO:0004715">
    <property type="term" value="F:non-membrane spanning protein tyrosine kinase activity"/>
    <property type="evidence" value="ECO:0000318"/>
    <property type="project" value="GO_Central"/>
</dbReference>
<dbReference type="GO" id="GO:0001784">
    <property type="term" value="F:phosphotyrosine residue binding"/>
    <property type="evidence" value="ECO:0007669"/>
    <property type="project" value="Ensembl"/>
</dbReference>
<dbReference type="GO" id="GO:0005102">
    <property type="term" value="F:signaling receptor binding"/>
    <property type="evidence" value="ECO:0000318"/>
    <property type="project" value="GO_Central"/>
</dbReference>
<dbReference type="GO" id="GO:0044325">
    <property type="term" value="F:transmembrane transporter binding"/>
    <property type="evidence" value="ECO:0007669"/>
    <property type="project" value="Ensembl"/>
</dbReference>
<dbReference type="GO" id="GO:0030154">
    <property type="term" value="P:cell differentiation"/>
    <property type="evidence" value="ECO:0000318"/>
    <property type="project" value="GO_Central"/>
</dbReference>
<dbReference type="GO" id="GO:0007169">
    <property type="term" value="P:cell surface receptor protein tyrosine kinase signaling pathway"/>
    <property type="evidence" value="ECO:0000318"/>
    <property type="project" value="GO_Central"/>
</dbReference>
<dbReference type="CDD" id="cd05069">
    <property type="entry name" value="PTKc_Yes"/>
    <property type="match status" value="1"/>
</dbReference>
<dbReference type="CDD" id="cd09933">
    <property type="entry name" value="SH2_Src_family"/>
    <property type="match status" value="1"/>
</dbReference>
<dbReference type="CDD" id="cd12007">
    <property type="entry name" value="SH3_Yes"/>
    <property type="match status" value="1"/>
</dbReference>
<dbReference type="FunFam" id="1.10.510.10:FF:000553">
    <property type="entry name" value="Tyrosine-protein kinase"/>
    <property type="match status" value="1"/>
</dbReference>
<dbReference type="FunFam" id="2.30.30.40:FF:000022">
    <property type="entry name" value="Tyrosine-protein kinase"/>
    <property type="match status" value="1"/>
</dbReference>
<dbReference type="FunFam" id="3.30.200.20:FF:000016">
    <property type="entry name" value="Tyrosine-protein kinase"/>
    <property type="match status" value="1"/>
</dbReference>
<dbReference type="FunFam" id="3.30.505.10:FF:000001">
    <property type="entry name" value="Tyrosine-protein kinase"/>
    <property type="match status" value="1"/>
</dbReference>
<dbReference type="Gene3D" id="3.30.200.20">
    <property type="entry name" value="Phosphorylase Kinase, domain 1"/>
    <property type="match status" value="1"/>
</dbReference>
<dbReference type="Gene3D" id="3.30.505.10">
    <property type="entry name" value="SH2 domain"/>
    <property type="match status" value="1"/>
</dbReference>
<dbReference type="Gene3D" id="2.30.30.40">
    <property type="entry name" value="SH3 Domains"/>
    <property type="match status" value="1"/>
</dbReference>
<dbReference type="Gene3D" id="1.10.510.10">
    <property type="entry name" value="Transferase(Phosphotransferase) domain 1"/>
    <property type="match status" value="1"/>
</dbReference>
<dbReference type="InterPro" id="IPR011009">
    <property type="entry name" value="Kinase-like_dom_sf"/>
</dbReference>
<dbReference type="InterPro" id="IPR050198">
    <property type="entry name" value="Non-receptor_tyrosine_kinases"/>
</dbReference>
<dbReference type="InterPro" id="IPR000719">
    <property type="entry name" value="Prot_kinase_dom"/>
</dbReference>
<dbReference type="InterPro" id="IPR017441">
    <property type="entry name" value="Protein_kinase_ATP_BS"/>
</dbReference>
<dbReference type="InterPro" id="IPR001245">
    <property type="entry name" value="Ser-Thr/Tyr_kinase_cat_dom"/>
</dbReference>
<dbReference type="InterPro" id="IPR000980">
    <property type="entry name" value="SH2"/>
</dbReference>
<dbReference type="InterPro" id="IPR036860">
    <property type="entry name" value="SH2_dom_sf"/>
</dbReference>
<dbReference type="InterPro" id="IPR036028">
    <property type="entry name" value="SH3-like_dom_sf"/>
</dbReference>
<dbReference type="InterPro" id="IPR001452">
    <property type="entry name" value="SH3_domain"/>
</dbReference>
<dbReference type="InterPro" id="IPR008266">
    <property type="entry name" value="Tyr_kinase_AS"/>
</dbReference>
<dbReference type="InterPro" id="IPR020635">
    <property type="entry name" value="Tyr_kinase_cat_dom"/>
</dbReference>
<dbReference type="InterPro" id="IPR035751">
    <property type="entry name" value="Yes_SH3"/>
</dbReference>
<dbReference type="PANTHER" id="PTHR24418">
    <property type="entry name" value="TYROSINE-PROTEIN KINASE"/>
    <property type="match status" value="1"/>
</dbReference>
<dbReference type="Pfam" id="PF07714">
    <property type="entry name" value="PK_Tyr_Ser-Thr"/>
    <property type="match status" value="1"/>
</dbReference>
<dbReference type="Pfam" id="PF00017">
    <property type="entry name" value="SH2"/>
    <property type="match status" value="1"/>
</dbReference>
<dbReference type="Pfam" id="PF00018">
    <property type="entry name" value="SH3_1"/>
    <property type="match status" value="1"/>
</dbReference>
<dbReference type="PRINTS" id="PR00401">
    <property type="entry name" value="SH2DOMAIN"/>
</dbReference>
<dbReference type="PRINTS" id="PR00452">
    <property type="entry name" value="SH3DOMAIN"/>
</dbReference>
<dbReference type="PRINTS" id="PR00109">
    <property type="entry name" value="TYRKINASE"/>
</dbReference>
<dbReference type="SMART" id="SM00252">
    <property type="entry name" value="SH2"/>
    <property type="match status" value="1"/>
</dbReference>
<dbReference type="SMART" id="SM00326">
    <property type="entry name" value="SH3"/>
    <property type="match status" value="1"/>
</dbReference>
<dbReference type="SMART" id="SM00219">
    <property type="entry name" value="TyrKc"/>
    <property type="match status" value="1"/>
</dbReference>
<dbReference type="SUPFAM" id="SSF56112">
    <property type="entry name" value="Protein kinase-like (PK-like)"/>
    <property type="match status" value="1"/>
</dbReference>
<dbReference type="SUPFAM" id="SSF55550">
    <property type="entry name" value="SH2 domain"/>
    <property type="match status" value="1"/>
</dbReference>
<dbReference type="SUPFAM" id="SSF50044">
    <property type="entry name" value="SH3-domain"/>
    <property type="match status" value="1"/>
</dbReference>
<dbReference type="PROSITE" id="PS00107">
    <property type="entry name" value="PROTEIN_KINASE_ATP"/>
    <property type="match status" value="1"/>
</dbReference>
<dbReference type="PROSITE" id="PS50011">
    <property type="entry name" value="PROTEIN_KINASE_DOM"/>
    <property type="match status" value="1"/>
</dbReference>
<dbReference type="PROSITE" id="PS00109">
    <property type="entry name" value="PROTEIN_KINASE_TYR"/>
    <property type="match status" value="1"/>
</dbReference>
<dbReference type="PROSITE" id="PS50001">
    <property type="entry name" value="SH2"/>
    <property type="match status" value="1"/>
</dbReference>
<dbReference type="PROSITE" id="PS50002">
    <property type="entry name" value="SH3"/>
    <property type="match status" value="1"/>
</dbReference>